<evidence type="ECO:0000255" key="1"/>
<evidence type="ECO:0000255" key="2">
    <source>
        <dbReference type="HAMAP-Rule" id="MF_02120"/>
    </source>
</evidence>
<sequence>MPELLNKTKTNLNFENIKILIKKFQSPFWVYDSNIIHKKINLLKEFDIVRFAQKACSNIHILRLMKQKNIKVDAVSLGEIERALVAGFKPNSNEIIFTADLFDEETLSKVIDFKIPVNAGSIDMLEQLGKLSPGHHVWLRINPGFGHGHSKKTNTGGENSKHGIWNPRLAIPIIKKYKLKLIGLHMHIGSGVNYKHLKKVGQAMIEKAMEINEKILFISAGGGLPIPYTFNEKPIDTKKYFIIWDEARKKISRFLNTPIQLEIEPGRFLVAESGILISQVRAIKKMGDKNFVLIDAGFNDLMRPTMYGSYHHVSVVTKDDRNIHETETIDTIIGGPLCESGDIFTQKEGGNITTRKLPILKIGDYLIFHDVGAYGASMSSNYNTRPLIQEILLENNTFRTIRRRQKINELLNLEK</sequence>
<gene>
    <name evidence="2" type="primary">lysA</name>
    <name type="ordered locus">BUsg_423</name>
</gene>
<comment type="function">
    <text evidence="2">Specifically catalyzes the decarboxylation of meso-diaminopimelate (meso-DAP) to L-lysine.</text>
</comment>
<comment type="catalytic activity">
    <reaction evidence="2">
        <text>meso-2,6-diaminopimelate + H(+) = L-lysine + CO2</text>
        <dbReference type="Rhea" id="RHEA:15101"/>
        <dbReference type="ChEBI" id="CHEBI:15378"/>
        <dbReference type="ChEBI" id="CHEBI:16526"/>
        <dbReference type="ChEBI" id="CHEBI:32551"/>
        <dbReference type="ChEBI" id="CHEBI:57791"/>
        <dbReference type="EC" id="4.1.1.20"/>
    </reaction>
</comment>
<comment type="cofactor">
    <cofactor evidence="2">
        <name>pyridoxal 5'-phosphate</name>
        <dbReference type="ChEBI" id="CHEBI:597326"/>
    </cofactor>
</comment>
<comment type="pathway">
    <text evidence="2">Amino-acid biosynthesis; L-lysine biosynthesis via DAP pathway; L-lysine from DL-2,6-diaminopimelate: step 1/1.</text>
</comment>
<comment type="subunit">
    <text evidence="2">Homodimer.</text>
</comment>
<comment type="similarity">
    <text evidence="2">Belongs to the Orn/Lys/Arg decarboxylase class-II family. LysA subfamily.</text>
</comment>
<name>DCDA_BUCAP</name>
<accession>Q8K9C4</accession>
<proteinExistence type="inferred from homology"/>
<keyword id="KW-0028">Amino-acid biosynthesis</keyword>
<keyword id="KW-0210">Decarboxylase</keyword>
<keyword id="KW-0456">Lyase</keyword>
<keyword id="KW-0457">Lysine biosynthesis</keyword>
<keyword id="KW-0663">Pyridoxal phosphate</keyword>
<feature type="chain" id="PRO_0000149917" description="Diaminopimelate decarboxylase">
    <location>
        <begin position="1"/>
        <end position="415"/>
    </location>
</feature>
<feature type="active site" description="Proton donor" evidence="1">
    <location>
        <position position="338"/>
    </location>
</feature>
<feature type="binding site" evidence="2">
    <location>
        <position position="223"/>
    </location>
    <ligand>
        <name>pyridoxal 5'-phosphate</name>
        <dbReference type="ChEBI" id="CHEBI:597326"/>
    </ligand>
</feature>
<feature type="binding site" evidence="2">
    <location>
        <begin position="264"/>
        <end position="267"/>
    </location>
    <ligand>
        <name>pyridoxal 5'-phosphate</name>
        <dbReference type="ChEBI" id="CHEBI:597326"/>
    </ligand>
</feature>
<feature type="binding site" evidence="2">
    <location>
        <position position="267"/>
    </location>
    <ligand>
        <name>substrate</name>
    </ligand>
</feature>
<feature type="binding site" evidence="2">
    <location>
        <position position="303"/>
    </location>
    <ligand>
        <name>substrate</name>
    </ligand>
</feature>
<feature type="binding site" evidence="2">
    <location>
        <position position="307"/>
    </location>
    <ligand>
        <name>substrate</name>
    </ligand>
</feature>
<feature type="binding site" evidence="2">
    <location>
        <position position="339"/>
    </location>
    <ligand>
        <name>substrate</name>
    </ligand>
</feature>
<feature type="binding site" evidence="2">
    <location>
        <position position="374"/>
    </location>
    <ligand>
        <name>pyridoxal 5'-phosphate</name>
        <dbReference type="ChEBI" id="CHEBI:597326"/>
    </ligand>
</feature>
<feature type="binding site" evidence="2">
    <location>
        <position position="374"/>
    </location>
    <ligand>
        <name>substrate</name>
    </ligand>
</feature>
<feature type="modified residue" description="N6-(pyridoxal phosphate)lysine" evidence="2">
    <location>
        <position position="54"/>
    </location>
</feature>
<reference key="1">
    <citation type="journal article" date="2002" name="Science">
        <title>50 million years of genomic stasis in endosymbiotic bacteria.</title>
        <authorList>
            <person name="Tamas I."/>
            <person name="Klasson L."/>
            <person name="Canbaeck B."/>
            <person name="Naeslund A.K."/>
            <person name="Eriksson A.-S."/>
            <person name="Wernegreen J.J."/>
            <person name="Sandstroem J.P."/>
            <person name="Moran N.A."/>
            <person name="Andersson S.G.E."/>
        </authorList>
    </citation>
    <scope>NUCLEOTIDE SEQUENCE [LARGE SCALE GENOMIC DNA]</scope>
    <source>
        <strain>Sg</strain>
    </source>
</reference>
<protein>
    <recommendedName>
        <fullName evidence="2">Diaminopimelate decarboxylase</fullName>
        <shortName evidence="2">DAP decarboxylase</shortName>
        <shortName evidence="2">DAPDC</shortName>
        <ecNumber evidence="2">4.1.1.20</ecNumber>
    </recommendedName>
</protein>
<dbReference type="EC" id="4.1.1.20" evidence="2"/>
<dbReference type="EMBL" id="AE013218">
    <property type="protein sequence ID" value="AAM67967.1"/>
    <property type="molecule type" value="Genomic_DNA"/>
</dbReference>
<dbReference type="RefSeq" id="WP_011053934.1">
    <property type="nucleotide sequence ID" value="NC_004061.1"/>
</dbReference>
<dbReference type="SMR" id="Q8K9C4"/>
<dbReference type="STRING" id="198804.BUsg_423"/>
<dbReference type="GeneID" id="93003895"/>
<dbReference type="KEGG" id="bas:BUsg_423"/>
<dbReference type="eggNOG" id="COG0019">
    <property type="taxonomic scope" value="Bacteria"/>
</dbReference>
<dbReference type="HOGENOM" id="CLU_026444_0_2_6"/>
<dbReference type="UniPathway" id="UPA00034">
    <property type="reaction ID" value="UER00027"/>
</dbReference>
<dbReference type="Proteomes" id="UP000000416">
    <property type="component" value="Chromosome"/>
</dbReference>
<dbReference type="GO" id="GO:0008836">
    <property type="term" value="F:diaminopimelate decarboxylase activity"/>
    <property type="evidence" value="ECO:0007669"/>
    <property type="project" value="UniProtKB-UniRule"/>
</dbReference>
<dbReference type="GO" id="GO:0030170">
    <property type="term" value="F:pyridoxal phosphate binding"/>
    <property type="evidence" value="ECO:0007669"/>
    <property type="project" value="UniProtKB-UniRule"/>
</dbReference>
<dbReference type="GO" id="GO:0009089">
    <property type="term" value="P:lysine biosynthetic process via diaminopimelate"/>
    <property type="evidence" value="ECO:0007669"/>
    <property type="project" value="UniProtKB-UniRule"/>
</dbReference>
<dbReference type="CDD" id="cd06828">
    <property type="entry name" value="PLPDE_III_DapDC"/>
    <property type="match status" value="1"/>
</dbReference>
<dbReference type="Gene3D" id="3.20.20.10">
    <property type="entry name" value="Alanine racemase"/>
    <property type="match status" value="1"/>
</dbReference>
<dbReference type="Gene3D" id="2.40.37.10">
    <property type="entry name" value="Lyase, Ornithine Decarboxylase, Chain A, domain 1"/>
    <property type="match status" value="1"/>
</dbReference>
<dbReference type="HAMAP" id="MF_02120">
    <property type="entry name" value="LysA"/>
    <property type="match status" value="1"/>
</dbReference>
<dbReference type="InterPro" id="IPR009006">
    <property type="entry name" value="Ala_racemase/Decarboxylase_C"/>
</dbReference>
<dbReference type="InterPro" id="IPR002986">
    <property type="entry name" value="DAP_deCOOHase_LysA"/>
</dbReference>
<dbReference type="InterPro" id="IPR022643">
    <property type="entry name" value="De-COase2_C"/>
</dbReference>
<dbReference type="InterPro" id="IPR022657">
    <property type="entry name" value="De-COase2_CS"/>
</dbReference>
<dbReference type="InterPro" id="IPR022644">
    <property type="entry name" value="De-COase2_N"/>
</dbReference>
<dbReference type="InterPro" id="IPR000183">
    <property type="entry name" value="Orn/DAP/Arg_de-COase"/>
</dbReference>
<dbReference type="InterPro" id="IPR029066">
    <property type="entry name" value="PLP-binding_barrel"/>
</dbReference>
<dbReference type="NCBIfam" id="TIGR01048">
    <property type="entry name" value="lysA"/>
    <property type="match status" value="1"/>
</dbReference>
<dbReference type="PANTHER" id="PTHR43727">
    <property type="entry name" value="DIAMINOPIMELATE DECARBOXYLASE"/>
    <property type="match status" value="1"/>
</dbReference>
<dbReference type="PANTHER" id="PTHR43727:SF2">
    <property type="entry name" value="GROUP IV DECARBOXYLASE"/>
    <property type="match status" value="1"/>
</dbReference>
<dbReference type="Pfam" id="PF02784">
    <property type="entry name" value="Orn_Arg_deC_N"/>
    <property type="match status" value="1"/>
</dbReference>
<dbReference type="Pfam" id="PF00278">
    <property type="entry name" value="Orn_DAP_Arg_deC"/>
    <property type="match status" value="1"/>
</dbReference>
<dbReference type="PRINTS" id="PR01181">
    <property type="entry name" value="DAPDCRBXLASE"/>
</dbReference>
<dbReference type="PRINTS" id="PR01179">
    <property type="entry name" value="ODADCRBXLASE"/>
</dbReference>
<dbReference type="SUPFAM" id="SSF50621">
    <property type="entry name" value="Alanine racemase C-terminal domain-like"/>
    <property type="match status" value="1"/>
</dbReference>
<dbReference type="SUPFAM" id="SSF51419">
    <property type="entry name" value="PLP-binding barrel"/>
    <property type="match status" value="1"/>
</dbReference>
<dbReference type="PROSITE" id="PS00879">
    <property type="entry name" value="ODR_DC_2_2"/>
    <property type="match status" value="1"/>
</dbReference>
<organism>
    <name type="scientific">Buchnera aphidicola subsp. Schizaphis graminum (strain Sg)</name>
    <dbReference type="NCBI Taxonomy" id="198804"/>
    <lineage>
        <taxon>Bacteria</taxon>
        <taxon>Pseudomonadati</taxon>
        <taxon>Pseudomonadota</taxon>
        <taxon>Gammaproteobacteria</taxon>
        <taxon>Enterobacterales</taxon>
        <taxon>Erwiniaceae</taxon>
        <taxon>Buchnera</taxon>
    </lineage>
</organism>